<protein>
    <recommendedName>
        <fullName evidence="1">4-diphosphocytidyl-2-C-methyl-D-erythritol kinase</fullName>
        <shortName evidence="1">CMK</shortName>
        <ecNumber evidence="1">2.7.1.148</ecNumber>
    </recommendedName>
    <alternativeName>
        <fullName evidence="1">4-(cytidine-5'-diphospho)-2-C-methyl-D-erythritol kinase</fullName>
    </alternativeName>
</protein>
<name>ISPE_LACPL</name>
<feature type="chain" id="PRO_0000189226" description="4-diphosphocytidyl-2-C-methyl-D-erythritol kinase">
    <location>
        <begin position="1"/>
        <end position="288"/>
    </location>
</feature>
<feature type="active site" evidence="1">
    <location>
        <position position="10"/>
    </location>
</feature>
<feature type="active site" evidence="1">
    <location>
        <position position="136"/>
    </location>
</feature>
<feature type="binding site" evidence="1">
    <location>
        <begin position="94"/>
        <end position="104"/>
    </location>
    <ligand>
        <name>ATP</name>
        <dbReference type="ChEBI" id="CHEBI:30616"/>
    </ligand>
</feature>
<reference key="1">
    <citation type="journal article" date="2003" name="Proc. Natl. Acad. Sci. U.S.A.">
        <title>Complete genome sequence of Lactobacillus plantarum WCFS1.</title>
        <authorList>
            <person name="Kleerebezem M."/>
            <person name="Boekhorst J."/>
            <person name="van Kranenburg R."/>
            <person name="Molenaar D."/>
            <person name="Kuipers O.P."/>
            <person name="Leer R."/>
            <person name="Tarchini R."/>
            <person name="Peters S.A."/>
            <person name="Sandbrink H.M."/>
            <person name="Fiers M.W.E.J."/>
            <person name="Stiekema W."/>
            <person name="Klein Lankhorst R.M."/>
            <person name="Bron P.A."/>
            <person name="Hoffer S.M."/>
            <person name="Nierop Groot M.N."/>
            <person name="Kerkhoven R."/>
            <person name="De Vries M."/>
            <person name="Ursing B."/>
            <person name="De Vos W.M."/>
            <person name="Siezen R.J."/>
        </authorList>
    </citation>
    <scope>NUCLEOTIDE SEQUENCE [LARGE SCALE GENOMIC DNA]</scope>
    <source>
        <strain>ATCC BAA-793 / NCIMB 8826 / WCFS1</strain>
    </source>
</reference>
<reference key="2">
    <citation type="journal article" date="2012" name="J. Bacteriol.">
        <title>Complete resequencing and reannotation of the Lactobacillus plantarum WCFS1 genome.</title>
        <authorList>
            <person name="Siezen R.J."/>
            <person name="Francke C."/>
            <person name="Renckens B."/>
            <person name="Boekhorst J."/>
            <person name="Wels M."/>
            <person name="Kleerebezem M."/>
            <person name="van Hijum S.A."/>
        </authorList>
    </citation>
    <scope>NUCLEOTIDE SEQUENCE [LARGE SCALE GENOMIC DNA]</scope>
    <scope>GENOME REANNOTATION</scope>
    <source>
        <strain>ATCC BAA-793 / NCIMB 8826 / WCFS1</strain>
    </source>
</reference>
<sequence length="288" mass="32024">MQIVEKAPAKINLGLDTLFEHPNGDKEWDMVMTSVDLADYVMLESLHTNRIEVVTDSGFLPNDRRNLAFQAVSVLKRYCHVDRGVRIKIRKAIPVAAGLGGGSSDAAAVLRGLNRMWNLHLDLATLARLGLQVDSDVPYCVYSQTAHVTGKGDVVTPLPKLPPMWIILAKPKVSVSTPNILRQVNYERIDQHPNIEALLAGIQQQDFAEIFANMGNVLEPITAKRYPEILQIKRQLLTFGADAAQMSGTGPTVFGVCRKQSRAQRVYNSLKGFCREVYLVRPVNLNEH</sequence>
<proteinExistence type="inferred from homology"/>
<comment type="function">
    <text evidence="1">Catalyzes the phosphorylation of the position 2 hydroxy group of 4-diphosphocytidyl-2C-methyl-D-erythritol.</text>
</comment>
<comment type="catalytic activity">
    <reaction evidence="1">
        <text>4-CDP-2-C-methyl-D-erythritol + ATP = 4-CDP-2-C-methyl-D-erythritol 2-phosphate + ADP + H(+)</text>
        <dbReference type="Rhea" id="RHEA:18437"/>
        <dbReference type="ChEBI" id="CHEBI:15378"/>
        <dbReference type="ChEBI" id="CHEBI:30616"/>
        <dbReference type="ChEBI" id="CHEBI:57823"/>
        <dbReference type="ChEBI" id="CHEBI:57919"/>
        <dbReference type="ChEBI" id="CHEBI:456216"/>
        <dbReference type="EC" id="2.7.1.148"/>
    </reaction>
</comment>
<comment type="pathway">
    <text evidence="1">Isoprenoid biosynthesis; isopentenyl diphosphate biosynthesis via DXP pathway; isopentenyl diphosphate from 1-deoxy-D-xylulose 5-phosphate: step 3/6.</text>
</comment>
<comment type="similarity">
    <text evidence="1">Belongs to the GHMP kinase family. IspE subfamily.</text>
</comment>
<organism>
    <name type="scientific">Lactiplantibacillus plantarum (strain ATCC BAA-793 / NCIMB 8826 / WCFS1)</name>
    <name type="common">Lactobacillus plantarum</name>
    <dbReference type="NCBI Taxonomy" id="220668"/>
    <lineage>
        <taxon>Bacteria</taxon>
        <taxon>Bacillati</taxon>
        <taxon>Bacillota</taxon>
        <taxon>Bacilli</taxon>
        <taxon>Lactobacillales</taxon>
        <taxon>Lactobacillaceae</taxon>
        <taxon>Lactiplantibacillus</taxon>
    </lineage>
</organism>
<dbReference type="EC" id="2.7.1.148" evidence="1"/>
<dbReference type="EMBL" id="AL935263">
    <property type="protein sequence ID" value="CCC77963.1"/>
    <property type="molecule type" value="Genomic_DNA"/>
</dbReference>
<dbReference type="RefSeq" id="WP_003643828.1">
    <property type="nucleotide sequence ID" value="NC_004567.2"/>
</dbReference>
<dbReference type="RefSeq" id="YP_004888477.1">
    <property type="nucleotide sequence ID" value="NC_004567.2"/>
</dbReference>
<dbReference type="SMR" id="Q88Z91"/>
<dbReference type="STRING" id="220668.lp_0460"/>
<dbReference type="EnsemblBacteria" id="CCC77963">
    <property type="protein sequence ID" value="CCC77963"/>
    <property type="gene ID" value="lp_0460"/>
</dbReference>
<dbReference type="GeneID" id="77217095"/>
<dbReference type="KEGG" id="lpl:lp_0460"/>
<dbReference type="PATRIC" id="fig|220668.9.peg.380"/>
<dbReference type="eggNOG" id="COG1947">
    <property type="taxonomic scope" value="Bacteria"/>
</dbReference>
<dbReference type="HOGENOM" id="CLU_053057_1_1_9"/>
<dbReference type="OrthoDB" id="9809438at2"/>
<dbReference type="PhylomeDB" id="Q88Z91"/>
<dbReference type="UniPathway" id="UPA00056">
    <property type="reaction ID" value="UER00094"/>
</dbReference>
<dbReference type="Proteomes" id="UP000000432">
    <property type="component" value="Chromosome"/>
</dbReference>
<dbReference type="GO" id="GO:0050515">
    <property type="term" value="F:4-(cytidine 5'-diphospho)-2-C-methyl-D-erythritol kinase activity"/>
    <property type="evidence" value="ECO:0007669"/>
    <property type="project" value="UniProtKB-UniRule"/>
</dbReference>
<dbReference type="GO" id="GO:0005524">
    <property type="term" value="F:ATP binding"/>
    <property type="evidence" value="ECO:0007669"/>
    <property type="project" value="UniProtKB-UniRule"/>
</dbReference>
<dbReference type="GO" id="GO:0019288">
    <property type="term" value="P:isopentenyl diphosphate biosynthetic process, methylerythritol 4-phosphate pathway"/>
    <property type="evidence" value="ECO:0007669"/>
    <property type="project" value="UniProtKB-UniRule"/>
</dbReference>
<dbReference type="GO" id="GO:0016114">
    <property type="term" value="P:terpenoid biosynthetic process"/>
    <property type="evidence" value="ECO:0007669"/>
    <property type="project" value="InterPro"/>
</dbReference>
<dbReference type="FunFam" id="3.30.70.890:FF:000006">
    <property type="entry name" value="4-diphosphocytidyl-2-C-methyl-D-erythritol kinase"/>
    <property type="match status" value="1"/>
</dbReference>
<dbReference type="Gene3D" id="3.30.230.10">
    <property type="match status" value="1"/>
</dbReference>
<dbReference type="Gene3D" id="3.30.70.890">
    <property type="entry name" value="GHMP kinase, C-terminal domain"/>
    <property type="match status" value="1"/>
</dbReference>
<dbReference type="HAMAP" id="MF_00061">
    <property type="entry name" value="IspE"/>
    <property type="match status" value="1"/>
</dbReference>
<dbReference type="InterPro" id="IPR013750">
    <property type="entry name" value="GHMP_kinase_C_dom"/>
</dbReference>
<dbReference type="InterPro" id="IPR036554">
    <property type="entry name" value="GHMP_kinase_C_sf"/>
</dbReference>
<dbReference type="InterPro" id="IPR006204">
    <property type="entry name" value="GHMP_kinase_N_dom"/>
</dbReference>
<dbReference type="InterPro" id="IPR004424">
    <property type="entry name" value="IspE"/>
</dbReference>
<dbReference type="InterPro" id="IPR020568">
    <property type="entry name" value="Ribosomal_Su5_D2-typ_SF"/>
</dbReference>
<dbReference type="InterPro" id="IPR014721">
    <property type="entry name" value="Ribsml_uS5_D2-typ_fold_subgr"/>
</dbReference>
<dbReference type="NCBIfam" id="TIGR00154">
    <property type="entry name" value="ispE"/>
    <property type="match status" value="1"/>
</dbReference>
<dbReference type="PANTHER" id="PTHR43527">
    <property type="entry name" value="4-DIPHOSPHOCYTIDYL-2-C-METHYL-D-ERYTHRITOL KINASE, CHLOROPLASTIC"/>
    <property type="match status" value="1"/>
</dbReference>
<dbReference type="PANTHER" id="PTHR43527:SF2">
    <property type="entry name" value="4-DIPHOSPHOCYTIDYL-2-C-METHYL-D-ERYTHRITOL KINASE, CHLOROPLASTIC"/>
    <property type="match status" value="1"/>
</dbReference>
<dbReference type="Pfam" id="PF08544">
    <property type="entry name" value="GHMP_kinases_C"/>
    <property type="match status" value="1"/>
</dbReference>
<dbReference type="Pfam" id="PF00288">
    <property type="entry name" value="GHMP_kinases_N"/>
    <property type="match status" value="1"/>
</dbReference>
<dbReference type="PIRSF" id="PIRSF010376">
    <property type="entry name" value="IspE"/>
    <property type="match status" value="1"/>
</dbReference>
<dbReference type="SUPFAM" id="SSF55060">
    <property type="entry name" value="GHMP Kinase, C-terminal domain"/>
    <property type="match status" value="1"/>
</dbReference>
<dbReference type="SUPFAM" id="SSF54211">
    <property type="entry name" value="Ribosomal protein S5 domain 2-like"/>
    <property type="match status" value="1"/>
</dbReference>
<keyword id="KW-0067">ATP-binding</keyword>
<keyword id="KW-0414">Isoprene biosynthesis</keyword>
<keyword id="KW-0418">Kinase</keyword>
<keyword id="KW-0547">Nucleotide-binding</keyword>
<keyword id="KW-1185">Reference proteome</keyword>
<keyword id="KW-0808">Transferase</keyword>
<gene>
    <name evidence="1" type="primary">ispE</name>
    <name type="ordered locus">lp_0460</name>
</gene>
<accession>Q88Z91</accession>
<accession>F9UU43</accession>
<evidence type="ECO:0000255" key="1">
    <source>
        <dbReference type="HAMAP-Rule" id="MF_00061"/>
    </source>
</evidence>